<comment type="function">
    <text evidence="2">Catalyzes the formation of N(7)-methylguanine at position 46 (m7G46) in tRNA.</text>
</comment>
<comment type="catalytic activity">
    <reaction evidence="2">
        <text>guanosine(46) in tRNA + S-adenosyl-L-methionine = N(7)-methylguanosine(46) in tRNA + S-adenosyl-L-homocysteine</text>
        <dbReference type="Rhea" id="RHEA:42708"/>
        <dbReference type="Rhea" id="RHEA-COMP:10188"/>
        <dbReference type="Rhea" id="RHEA-COMP:10189"/>
        <dbReference type="ChEBI" id="CHEBI:57856"/>
        <dbReference type="ChEBI" id="CHEBI:59789"/>
        <dbReference type="ChEBI" id="CHEBI:74269"/>
        <dbReference type="ChEBI" id="CHEBI:74480"/>
        <dbReference type="EC" id="2.1.1.33"/>
    </reaction>
</comment>
<comment type="pathway">
    <text evidence="2">tRNA modification; N(7)-methylguanine-tRNA biosynthesis.</text>
</comment>
<comment type="similarity">
    <text evidence="2">Belongs to the class I-like SAM-binding methyltransferase superfamily. TrmB family.</text>
</comment>
<keyword id="KW-0489">Methyltransferase</keyword>
<keyword id="KW-1185">Reference proteome</keyword>
<keyword id="KW-0949">S-adenosyl-L-methionine</keyword>
<keyword id="KW-0808">Transferase</keyword>
<keyword id="KW-0819">tRNA processing</keyword>
<gene>
    <name evidence="2" type="primary">trmB</name>
    <name type="ordered locus">SSA_1902</name>
</gene>
<accession>A3CQ23</accession>
<feature type="chain" id="PRO_0000288240" description="tRNA (guanine-N(7)-)-methyltransferase">
    <location>
        <begin position="1"/>
        <end position="212"/>
    </location>
</feature>
<feature type="region of interest" description="Interaction with RNA" evidence="2">
    <location>
        <begin position="124"/>
        <end position="129"/>
    </location>
</feature>
<feature type="active site" evidence="1">
    <location>
        <position position="118"/>
    </location>
</feature>
<feature type="binding site" evidence="2">
    <location>
        <position position="44"/>
    </location>
    <ligand>
        <name>S-adenosyl-L-methionine</name>
        <dbReference type="ChEBI" id="CHEBI:59789"/>
    </ligand>
</feature>
<feature type="binding site" evidence="2">
    <location>
        <position position="69"/>
    </location>
    <ligand>
        <name>S-adenosyl-L-methionine</name>
        <dbReference type="ChEBI" id="CHEBI:59789"/>
    </ligand>
</feature>
<feature type="binding site" evidence="2">
    <location>
        <position position="96"/>
    </location>
    <ligand>
        <name>S-adenosyl-L-methionine</name>
        <dbReference type="ChEBI" id="CHEBI:59789"/>
    </ligand>
</feature>
<feature type="binding site" evidence="2">
    <location>
        <position position="118"/>
    </location>
    <ligand>
        <name>S-adenosyl-L-methionine</name>
        <dbReference type="ChEBI" id="CHEBI:59789"/>
    </ligand>
</feature>
<feature type="binding site" evidence="2">
    <location>
        <position position="122"/>
    </location>
    <ligand>
        <name>substrate</name>
    </ligand>
</feature>
<feature type="binding site" evidence="2">
    <location>
        <position position="154"/>
    </location>
    <ligand>
        <name>substrate</name>
    </ligand>
</feature>
<feature type="binding site" evidence="2">
    <location>
        <begin position="191"/>
        <end position="194"/>
    </location>
    <ligand>
        <name>substrate</name>
    </ligand>
</feature>
<proteinExistence type="inferred from homology"/>
<organism>
    <name type="scientific">Streptococcus sanguinis (strain SK36)</name>
    <dbReference type="NCBI Taxonomy" id="388919"/>
    <lineage>
        <taxon>Bacteria</taxon>
        <taxon>Bacillati</taxon>
        <taxon>Bacillota</taxon>
        <taxon>Bacilli</taxon>
        <taxon>Lactobacillales</taxon>
        <taxon>Streptococcaceae</taxon>
        <taxon>Streptococcus</taxon>
    </lineage>
</organism>
<name>TRMB_STRSV</name>
<evidence type="ECO:0000250" key="1"/>
<evidence type="ECO:0000255" key="2">
    <source>
        <dbReference type="HAMAP-Rule" id="MF_01057"/>
    </source>
</evidence>
<dbReference type="EC" id="2.1.1.33" evidence="2"/>
<dbReference type="EMBL" id="CP000387">
    <property type="protein sequence ID" value="ABN45278.1"/>
    <property type="molecule type" value="Genomic_DNA"/>
</dbReference>
<dbReference type="RefSeq" id="WP_002893561.1">
    <property type="nucleotide sequence ID" value="NC_009009.1"/>
</dbReference>
<dbReference type="RefSeq" id="YP_001035828.1">
    <property type="nucleotide sequence ID" value="NC_009009.1"/>
</dbReference>
<dbReference type="SMR" id="A3CQ23"/>
<dbReference type="STRING" id="388919.SSA_1902"/>
<dbReference type="KEGG" id="ssa:SSA_1902"/>
<dbReference type="PATRIC" id="fig|388919.9.peg.1803"/>
<dbReference type="eggNOG" id="COG0220">
    <property type="taxonomic scope" value="Bacteria"/>
</dbReference>
<dbReference type="HOGENOM" id="CLU_050910_2_1_9"/>
<dbReference type="OrthoDB" id="9802090at2"/>
<dbReference type="UniPathway" id="UPA00989"/>
<dbReference type="Proteomes" id="UP000002148">
    <property type="component" value="Chromosome"/>
</dbReference>
<dbReference type="GO" id="GO:0043527">
    <property type="term" value="C:tRNA methyltransferase complex"/>
    <property type="evidence" value="ECO:0007669"/>
    <property type="project" value="TreeGrafter"/>
</dbReference>
<dbReference type="GO" id="GO:0008176">
    <property type="term" value="F:tRNA (guanine(46)-N7)-methyltransferase activity"/>
    <property type="evidence" value="ECO:0007669"/>
    <property type="project" value="UniProtKB-UniRule"/>
</dbReference>
<dbReference type="CDD" id="cd02440">
    <property type="entry name" value="AdoMet_MTases"/>
    <property type="match status" value="1"/>
</dbReference>
<dbReference type="FunFam" id="3.40.50.150:FF:000035">
    <property type="entry name" value="tRNA (guanine-N(7)-)-methyltransferase"/>
    <property type="match status" value="1"/>
</dbReference>
<dbReference type="Gene3D" id="3.40.50.150">
    <property type="entry name" value="Vaccinia Virus protein VP39"/>
    <property type="match status" value="1"/>
</dbReference>
<dbReference type="HAMAP" id="MF_01057">
    <property type="entry name" value="tRNA_methyltr_TrmB"/>
    <property type="match status" value="1"/>
</dbReference>
<dbReference type="InterPro" id="IPR029063">
    <property type="entry name" value="SAM-dependent_MTases_sf"/>
</dbReference>
<dbReference type="InterPro" id="IPR003358">
    <property type="entry name" value="tRNA_(Gua-N-7)_MeTrfase_Trmb"/>
</dbReference>
<dbReference type="InterPro" id="IPR055361">
    <property type="entry name" value="tRNA_methyltr_TrmB_bact"/>
</dbReference>
<dbReference type="NCBIfam" id="NF001080">
    <property type="entry name" value="PRK00121.2-2"/>
    <property type="match status" value="1"/>
</dbReference>
<dbReference type="NCBIfam" id="TIGR00091">
    <property type="entry name" value="tRNA (guanosine(46)-N7)-methyltransferase TrmB"/>
    <property type="match status" value="1"/>
</dbReference>
<dbReference type="PANTHER" id="PTHR23417">
    <property type="entry name" value="3-DEOXY-D-MANNO-OCTULOSONIC-ACID TRANSFERASE/TRNA GUANINE-N 7 - -METHYLTRANSFERASE"/>
    <property type="match status" value="1"/>
</dbReference>
<dbReference type="PANTHER" id="PTHR23417:SF14">
    <property type="entry name" value="PENTACOTRIPEPTIDE-REPEAT REGION OF PRORP DOMAIN-CONTAINING PROTEIN"/>
    <property type="match status" value="1"/>
</dbReference>
<dbReference type="Pfam" id="PF02390">
    <property type="entry name" value="Methyltransf_4"/>
    <property type="match status" value="1"/>
</dbReference>
<dbReference type="SUPFAM" id="SSF53335">
    <property type="entry name" value="S-adenosyl-L-methionine-dependent methyltransferases"/>
    <property type="match status" value="1"/>
</dbReference>
<dbReference type="PROSITE" id="PS51625">
    <property type="entry name" value="SAM_MT_TRMB"/>
    <property type="match status" value="1"/>
</dbReference>
<reference key="1">
    <citation type="journal article" date="2007" name="J. Bacteriol.">
        <title>Genome of the opportunistic pathogen Streptococcus sanguinis.</title>
        <authorList>
            <person name="Xu P."/>
            <person name="Alves J.M."/>
            <person name="Kitten T."/>
            <person name="Brown A."/>
            <person name="Chen Z."/>
            <person name="Ozaki L.S."/>
            <person name="Manque P."/>
            <person name="Ge X."/>
            <person name="Serrano M.G."/>
            <person name="Puiu D."/>
            <person name="Hendricks S."/>
            <person name="Wang Y."/>
            <person name="Chaplin M.D."/>
            <person name="Akan D."/>
            <person name="Paik S."/>
            <person name="Peterson D.L."/>
            <person name="Macrina F.L."/>
            <person name="Buck G.A."/>
        </authorList>
    </citation>
    <scope>NUCLEOTIDE SEQUENCE [LARGE SCALE GENOMIC DNA]</scope>
    <source>
        <strain>SK36</strain>
    </source>
</reference>
<sequence>MRVRNRKGATELLEAHPQYVILNPADAKGRWQEIFGNDHPIHVEVGSGKGAFVSGMAKANPEINYIGIDIQKSVLSYALDKVLATDVPNIKLLWVDGSDLTDYFEEGEIDRLYLNFSDPWPKKRHEKRRLTYQSFLATYQQILPENGEIHFKTDNRGLFEYSLVSFSQYGMKLKGVWLDLHASDFEDNVLTEYEQKFANKGQVIYRVEAAFE</sequence>
<protein>
    <recommendedName>
        <fullName evidence="2">tRNA (guanine-N(7)-)-methyltransferase</fullName>
        <ecNumber evidence="2">2.1.1.33</ecNumber>
    </recommendedName>
    <alternativeName>
        <fullName evidence="2">tRNA (guanine(46)-N(7))-methyltransferase</fullName>
    </alternativeName>
    <alternativeName>
        <fullName evidence="2">tRNA(m7G46)-methyltransferase</fullName>
    </alternativeName>
</protein>